<accession>B5Z7F7</accession>
<proteinExistence type="inferred from homology"/>
<evidence type="ECO:0000255" key="1">
    <source>
        <dbReference type="HAMAP-Rule" id="MF_00303"/>
    </source>
</evidence>
<protein>
    <recommendedName>
        <fullName evidence="1">Trigger factor</fullName>
        <shortName evidence="1">TF</shortName>
        <ecNumber evidence="1">5.2.1.8</ecNumber>
    </recommendedName>
    <alternativeName>
        <fullName evidence="1">PPIase</fullName>
    </alternativeName>
</protein>
<organism>
    <name type="scientific">Helicobacter pylori (strain G27)</name>
    <dbReference type="NCBI Taxonomy" id="563041"/>
    <lineage>
        <taxon>Bacteria</taxon>
        <taxon>Pseudomonadati</taxon>
        <taxon>Campylobacterota</taxon>
        <taxon>Epsilonproteobacteria</taxon>
        <taxon>Campylobacterales</taxon>
        <taxon>Helicobacteraceae</taxon>
        <taxon>Helicobacter</taxon>
    </lineage>
</organism>
<keyword id="KW-0131">Cell cycle</keyword>
<keyword id="KW-0132">Cell division</keyword>
<keyword id="KW-0143">Chaperone</keyword>
<keyword id="KW-0963">Cytoplasm</keyword>
<keyword id="KW-0413">Isomerase</keyword>
<keyword id="KW-1185">Reference proteome</keyword>
<keyword id="KW-0697">Rotamase</keyword>
<comment type="function">
    <text evidence="1">Involved in protein export. Acts as a chaperone by maintaining the newly synthesized protein in an open conformation. Functions as a peptidyl-prolyl cis-trans isomerase.</text>
</comment>
<comment type="catalytic activity">
    <reaction evidence="1">
        <text>[protein]-peptidylproline (omega=180) = [protein]-peptidylproline (omega=0)</text>
        <dbReference type="Rhea" id="RHEA:16237"/>
        <dbReference type="Rhea" id="RHEA-COMP:10747"/>
        <dbReference type="Rhea" id="RHEA-COMP:10748"/>
        <dbReference type="ChEBI" id="CHEBI:83833"/>
        <dbReference type="ChEBI" id="CHEBI:83834"/>
        <dbReference type="EC" id="5.2.1.8"/>
    </reaction>
</comment>
<comment type="subcellular location">
    <subcellularLocation>
        <location>Cytoplasm</location>
    </subcellularLocation>
    <text evidence="1">About half TF is bound to the ribosome near the polypeptide exit tunnel while the other half is free in the cytoplasm.</text>
</comment>
<comment type="domain">
    <text evidence="1">Consists of 3 domains; the N-terminus binds the ribosome, the middle domain has PPIase activity, while the C-terminus has intrinsic chaperone activity on its own.</text>
</comment>
<comment type="similarity">
    <text evidence="1">Belongs to the FKBP-type PPIase family. Tig subfamily.</text>
</comment>
<sequence>MNLEVKKIDTANARLSAKPSVEDLEKRYDKIAQKIAQKVKIDGFRRGKVPLSLVKTRYQAQIDQDAQEEMIQEVLKNAFKELGIENKDLIGSPNLTKFEKKDAHFEIEADIGLKPTIVLDKIKECVPSVGVEIPNEEKINERLKQLAKDYAKFVDTDAQRKAQNDDKLTIDFEGFIDNAPFEGGKAENFTLILGNKQMLEDFEKALLGMQASEEKEFPLTFPSGYHAEHLAGKEALFKVKLHQIQAREALEINDELAKIVLANEENATLKLLKERVKGQLFLENKARLYNEELKEKLIENLDEKILFDLPKTIIEQEMDLLFRNALYSMQAEEVKSLQESQEKAKEKRESFRNDATKSVKITFIIDALAKEEKIGVHDNEVFQTLYYEAMMTGQNPESLIEQYRKNNMLAAVKMAMIEDRVLAYLLDKNLPKEQQEILEKMRPNAQKTQAG</sequence>
<reference key="1">
    <citation type="journal article" date="2009" name="J. Bacteriol.">
        <title>The complete genome sequence of Helicobacter pylori strain G27.</title>
        <authorList>
            <person name="Baltrus D.A."/>
            <person name="Amieva M.R."/>
            <person name="Covacci A."/>
            <person name="Lowe T.M."/>
            <person name="Merrell D.S."/>
            <person name="Ottemann K.M."/>
            <person name="Stein M."/>
            <person name="Salama N.R."/>
            <person name="Guillemin K."/>
        </authorList>
    </citation>
    <scope>NUCLEOTIDE SEQUENCE [LARGE SCALE GENOMIC DNA]</scope>
    <source>
        <strain>G27</strain>
    </source>
</reference>
<gene>
    <name evidence="1" type="primary">tig</name>
    <name type="ordered locus">HPG27_751</name>
</gene>
<name>TIG_HELPG</name>
<feature type="chain" id="PRO_1000115541" description="Trigger factor">
    <location>
        <begin position="1"/>
        <end position="451"/>
    </location>
</feature>
<feature type="domain" description="PPIase FKBP-type" evidence="1">
    <location>
        <begin position="165"/>
        <end position="250"/>
    </location>
</feature>
<dbReference type="EC" id="5.2.1.8" evidence="1"/>
<dbReference type="EMBL" id="CP001173">
    <property type="protein sequence ID" value="ACI27506.1"/>
    <property type="molecule type" value="Genomic_DNA"/>
</dbReference>
<dbReference type="RefSeq" id="WP_001047801.1">
    <property type="nucleotide sequence ID" value="NC_011333.1"/>
</dbReference>
<dbReference type="SMR" id="B5Z7F7"/>
<dbReference type="KEGG" id="hpg:HPG27_751"/>
<dbReference type="HOGENOM" id="CLU_033058_2_2_7"/>
<dbReference type="Proteomes" id="UP000001735">
    <property type="component" value="Chromosome"/>
</dbReference>
<dbReference type="GO" id="GO:0005737">
    <property type="term" value="C:cytoplasm"/>
    <property type="evidence" value="ECO:0007669"/>
    <property type="project" value="UniProtKB-SubCell"/>
</dbReference>
<dbReference type="GO" id="GO:0003755">
    <property type="term" value="F:peptidyl-prolyl cis-trans isomerase activity"/>
    <property type="evidence" value="ECO:0007669"/>
    <property type="project" value="UniProtKB-UniRule"/>
</dbReference>
<dbReference type="GO" id="GO:0044183">
    <property type="term" value="F:protein folding chaperone"/>
    <property type="evidence" value="ECO:0007669"/>
    <property type="project" value="TreeGrafter"/>
</dbReference>
<dbReference type="GO" id="GO:0043022">
    <property type="term" value="F:ribosome binding"/>
    <property type="evidence" value="ECO:0007669"/>
    <property type="project" value="TreeGrafter"/>
</dbReference>
<dbReference type="GO" id="GO:0051083">
    <property type="term" value="P:'de novo' cotranslational protein folding"/>
    <property type="evidence" value="ECO:0007669"/>
    <property type="project" value="TreeGrafter"/>
</dbReference>
<dbReference type="GO" id="GO:0051301">
    <property type="term" value="P:cell division"/>
    <property type="evidence" value="ECO:0007669"/>
    <property type="project" value="UniProtKB-KW"/>
</dbReference>
<dbReference type="GO" id="GO:0061077">
    <property type="term" value="P:chaperone-mediated protein folding"/>
    <property type="evidence" value="ECO:0007669"/>
    <property type="project" value="TreeGrafter"/>
</dbReference>
<dbReference type="GO" id="GO:0015031">
    <property type="term" value="P:protein transport"/>
    <property type="evidence" value="ECO:0007669"/>
    <property type="project" value="UniProtKB-UniRule"/>
</dbReference>
<dbReference type="GO" id="GO:0043335">
    <property type="term" value="P:protein unfolding"/>
    <property type="evidence" value="ECO:0007669"/>
    <property type="project" value="TreeGrafter"/>
</dbReference>
<dbReference type="FunFam" id="3.10.50.40:FF:000001">
    <property type="entry name" value="Trigger factor"/>
    <property type="match status" value="1"/>
</dbReference>
<dbReference type="Gene3D" id="3.10.50.40">
    <property type="match status" value="1"/>
</dbReference>
<dbReference type="Gene3D" id="3.30.70.1050">
    <property type="entry name" value="Trigger factor ribosome-binding domain"/>
    <property type="match status" value="1"/>
</dbReference>
<dbReference type="Gene3D" id="1.10.3120.10">
    <property type="entry name" value="Trigger factor, C-terminal domain"/>
    <property type="match status" value="1"/>
</dbReference>
<dbReference type="HAMAP" id="MF_00303">
    <property type="entry name" value="Trigger_factor_Tig"/>
    <property type="match status" value="1"/>
</dbReference>
<dbReference type="InterPro" id="IPR046357">
    <property type="entry name" value="PPIase_dom_sf"/>
</dbReference>
<dbReference type="InterPro" id="IPR001179">
    <property type="entry name" value="PPIase_FKBP_dom"/>
</dbReference>
<dbReference type="InterPro" id="IPR005215">
    <property type="entry name" value="Trig_fac"/>
</dbReference>
<dbReference type="InterPro" id="IPR008880">
    <property type="entry name" value="Trigger_fac_C"/>
</dbReference>
<dbReference type="InterPro" id="IPR037041">
    <property type="entry name" value="Trigger_fac_C_sf"/>
</dbReference>
<dbReference type="InterPro" id="IPR008881">
    <property type="entry name" value="Trigger_fac_ribosome-bd_bac"/>
</dbReference>
<dbReference type="InterPro" id="IPR036611">
    <property type="entry name" value="Trigger_fac_ribosome-bd_sf"/>
</dbReference>
<dbReference type="InterPro" id="IPR027304">
    <property type="entry name" value="Trigger_fact/SurA_dom_sf"/>
</dbReference>
<dbReference type="NCBIfam" id="TIGR00115">
    <property type="entry name" value="tig"/>
    <property type="match status" value="1"/>
</dbReference>
<dbReference type="PANTHER" id="PTHR30560">
    <property type="entry name" value="TRIGGER FACTOR CHAPERONE AND PEPTIDYL-PROLYL CIS/TRANS ISOMERASE"/>
    <property type="match status" value="1"/>
</dbReference>
<dbReference type="PANTHER" id="PTHR30560:SF3">
    <property type="entry name" value="TRIGGER FACTOR-LIKE PROTEIN TIG, CHLOROPLASTIC"/>
    <property type="match status" value="1"/>
</dbReference>
<dbReference type="Pfam" id="PF00254">
    <property type="entry name" value="FKBP_C"/>
    <property type="match status" value="1"/>
</dbReference>
<dbReference type="Pfam" id="PF05698">
    <property type="entry name" value="Trigger_C"/>
    <property type="match status" value="1"/>
</dbReference>
<dbReference type="Pfam" id="PF05697">
    <property type="entry name" value="Trigger_N"/>
    <property type="match status" value="1"/>
</dbReference>
<dbReference type="PIRSF" id="PIRSF003095">
    <property type="entry name" value="Trigger_factor"/>
    <property type="match status" value="1"/>
</dbReference>
<dbReference type="SUPFAM" id="SSF54534">
    <property type="entry name" value="FKBP-like"/>
    <property type="match status" value="1"/>
</dbReference>
<dbReference type="SUPFAM" id="SSF109998">
    <property type="entry name" value="Triger factor/SurA peptide-binding domain-like"/>
    <property type="match status" value="1"/>
</dbReference>
<dbReference type="SUPFAM" id="SSF102735">
    <property type="entry name" value="Trigger factor ribosome-binding domain"/>
    <property type="match status" value="1"/>
</dbReference>
<dbReference type="PROSITE" id="PS50059">
    <property type="entry name" value="FKBP_PPIASE"/>
    <property type="match status" value="1"/>
</dbReference>